<comment type="function">
    <text evidence="1">NDH-1 shuttles electrons from NADH, via FMN and iron-sulfur (Fe-S) centers, to quinones in the respiratory chain. The immediate electron acceptor for the enzyme in this species is believed to be ubiquinone. Couples the redox reaction to proton translocation (for every two electrons transferred, four hydrogen ions are translocated across the cytoplasmic membrane), and thus conserves the redox energy in a proton gradient.</text>
</comment>
<comment type="catalytic activity">
    <reaction evidence="1">
        <text>a quinone + NADH + 5 H(+)(in) = a quinol + NAD(+) + 4 H(+)(out)</text>
        <dbReference type="Rhea" id="RHEA:57888"/>
        <dbReference type="ChEBI" id="CHEBI:15378"/>
        <dbReference type="ChEBI" id="CHEBI:24646"/>
        <dbReference type="ChEBI" id="CHEBI:57540"/>
        <dbReference type="ChEBI" id="CHEBI:57945"/>
        <dbReference type="ChEBI" id="CHEBI:132124"/>
    </reaction>
</comment>
<comment type="subunit">
    <text evidence="1">NDH-1 is composed of 14 different subunits. Subunits NuoB, C, D, E, F, and G constitute the peripheral sector of the complex.</text>
</comment>
<comment type="subcellular location">
    <subcellularLocation>
        <location evidence="1">Cell membrane</location>
        <topology evidence="1">Peripheral membrane protein</topology>
        <orientation evidence="1">Cytoplasmic side</orientation>
    </subcellularLocation>
</comment>
<comment type="similarity">
    <text evidence="1">Belongs to the complex I 49 kDa subunit family.</text>
</comment>
<protein>
    <recommendedName>
        <fullName evidence="1">NADH-quinone oxidoreductase subunit D 1</fullName>
        <ecNumber evidence="1">7.1.1.-</ecNumber>
    </recommendedName>
    <alternativeName>
        <fullName evidence="1">NADH dehydrogenase I subunit D 1</fullName>
    </alternativeName>
    <alternativeName>
        <fullName evidence="1">NDH-1 subunit D 1</fullName>
    </alternativeName>
</protein>
<gene>
    <name evidence="1" type="primary">nuoD1</name>
    <name type="ordered locus">Rcas_1321</name>
</gene>
<organism>
    <name type="scientific">Roseiflexus castenholzii (strain DSM 13941 / HLO8)</name>
    <dbReference type="NCBI Taxonomy" id="383372"/>
    <lineage>
        <taxon>Bacteria</taxon>
        <taxon>Bacillati</taxon>
        <taxon>Chloroflexota</taxon>
        <taxon>Chloroflexia</taxon>
        <taxon>Chloroflexales</taxon>
        <taxon>Roseiflexineae</taxon>
        <taxon>Roseiflexaceae</taxon>
        <taxon>Roseiflexus</taxon>
    </lineage>
</organism>
<sequence length="417" mass="46023">MTVAETRARNLSIPAPSQITRPALEGVKETMVLNMGPHHPSTHGVLRLVVELDGETVVDVAPDIGYLHTGIEKTMESKTYQKAVVLTDRTDYLAPLSNNLSYVLAVEKLLGCEVPERATVARVLLVELQRIASHLVWLGTHALDLAAMSVFLYGFREREQILDIFELVSGARMMTSYFRVGGLAYDLPIEFDAAVEAFLAIMPGRIDEYEALLTDNPLWIERTQGIGAIDSEAAIALGLTGPGLRATGVAWDLRKTMPYCGYETYSFAVPTATHGDIYDRYLVRMAEMRESVSICRQALQRLRDIGPGPYMTLDRKIAPPPKSEITQSMEALIHHFKLWTEGFKPPRGDALAAVESPRGELATYIVSDGSAKPYRVHFRAPSFVNLQSLPHMARGHLVADLVALIASLDPVLGEVDR</sequence>
<feature type="chain" id="PRO_0000357916" description="NADH-quinone oxidoreductase subunit D 1">
    <location>
        <begin position="1"/>
        <end position="417"/>
    </location>
</feature>
<name>NUOD1_ROSCS</name>
<reference key="1">
    <citation type="submission" date="2007-08" db="EMBL/GenBank/DDBJ databases">
        <title>Complete sequence of Roseiflexus castenholzii DSM 13941.</title>
        <authorList>
            <consortium name="US DOE Joint Genome Institute"/>
            <person name="Copeland A."/>
            <person name="Lucas S."/>
            <person name="Lapidus A."/>
            <person name="Barry K."/>
            <person name="Glavina del Rio T."/>
            <person name="Dalin E."/>
            <person name="Tice H."/>
            <person name="Pitluck S."/>
            <person name="Thompson L.S."/>
            <person name="Brettin T."/>
            <person name="Bruce D."/>
            <person name="Detter J.C."/>
            <person name="Han C."/>
            <person name="Tapia R."/>
            <person name="Schmutz J."/>
            <person name="Larimer F."/>
            <person name="Land M."/>
            <person name="Hauser L."/>
            <person name="Kyrpides N."/>
            <person name="Mikhailova N."/>
            <person name="Bryant D.A."/>
            <person name="Hanada S."/>
            <person name="Tsukatani Y."/>
            <person name="Richardson P."/>
        </authorList>
    </citation>
    <scope>NUCLEOTIDE SEQUENCE [LARGE SCALE GENOMIC DNA]</scope>
    <source>
        <strain>DSM 13941 / HLO8</strain>
    </source>
</reference>
<dbReference type="EC" id="7.1.1.-" evidence="1"/>
<dbReference type="EMBL" id="CP000804">
    <property type="protein sequence ID" value="ABU57417.1"/>
    <property type="molecule type" value="Genomic_DNA"/>
</dbReference>
<dbReference type="RefSeq" id="WP_012119846.1">
    <property type="nucleotide sequence ID" value="NC_009767.1"/>
</dbReference>
<dbReference type="SMR" id="A7NIV9"/>
<dbReference type="STRING" id="383372.Rcas_1321"/>
<dbReference type="KEGG" id="rca:Rcas_1321"/>
<dbReference type="eggNOG" id="COG0649">
    <property type="taxonomic scope" value="Bacteria"/>
</dbReference>
<dbReference type="HOGENOM" id="CLU_015134_1_2_0"/>
<dbReference type="OrthoDB" id="9801496at2"/>
<dbReference type="Proteomes" id="UP000000263">
    <property type="component" value="Chromosome"/>
</dbReference>
<dbReference type="GO" id="GO:0005886">
    <property type="term" value="C:plasma membrane"/>
    <property type="evidence" value="ECO:0007669"/>
    <property type="project" value="UniProtKB-SubCell"/>
</dbReference>
<dbReference type="GO" id="GO:0051287">
    <property type="term" value="F:NAD binding"/>
    <property type="evidence" value="ECO:0007669"/>
    <property type="project" value="InterPro"/>
</dbReference>
<dbReference type="GO" id="GO:0050136">
    <property type="term" value="F:NADH:ubiquinone reductase (non-electrogenic) activity"/>
    <property type="evidence" value="ECO:0007669"/>
    <property type="project" value="UniProtKB-UniRule"/>
</dbReference>
<dbReference type="GO" id="GO:0048038">
    <property type="term" value="F:quinone binding"/>
    <property type="evidence" value="ECO:0007669"/>
    <property type="project" value="UniProtKB-KW"/>
</dbReference>
<dbReference type="Gene3D" id="1.10.645.10">
    <property type="entry name" value="Cytochrome-c3 Hydrogenase, chain B"/>
    <property type="match status" value="1"/>
</dbReference>
<dbReference type="HAMAP" id="MF_01358">
    <property type="entry name" value="NDH1_NuoD"/>
    <property type="match status" value="1"/>
</dbReference>
<dbReference type="InterPro" id="IPR001135">
    <property type="entry name" value="NADH_Q_OxRdtase_suD"/>
</dbReference>
<dbReference type="InterPro" id="IPR014029">
    <property type="entry name" value="NADH_UbQ_OxRdtase_49kDa_CS"/>
</dbReference>
<dbReference type="InterPro" id="IPR022885">
    <property type="entry name" value="NDH1_su_D/H"/>
</dbReference>
<dbReference type="InterPro" id="IPR029014">
    <property type="entry name" value="NiFe-Hase_large"/>
</dbReference>
<dbReference type="NCBIfam" id="TIGR01962">
    <property type="entry name" value="NuoD"/>
    <property type="match status" value="1"/>
</dbReference>
<dbReference type="NCBIfam" id="NF004739">
    <property type="entry name" value="PRK06075.1"/>
    <property type="match status" value="1"/>
</dbReference>
<dbReference type="PANTHER" id="PTHR11993:SF10">
    <property type="entry name" value="NADH DEHYDROGENASE [UBIQUINONE] IRON-SULFUR PROTEIN 2, MITOCHONDRIAL"/>
    <property type="match status" value="1"/>
</dbReference>
<dbReference type="PANTHER" id="PTHR11993">
    <property type="entry name" value="NADH-UBIQUINONE OXIDOREDUCTASE 49 KDA SUBUNIT"/>
    <property type="match status" value="1"/>
</dbReference>
<dbReference type="Pfam" id="PF00346">
    <property type="entry name" value="Complex1_49kDa"/>
    <property type="match status" value="1"/>
</dbReference>
<dbReference type="SUPFAM" id="SSF56762">
    <property type="entry name" value="HydB/Nqo4-like"/>
    <property type="match status" value="1"/>
</dbReference>
<dbReference type="PROSITE" id="PS00535">
    <property type="entry name" value="COMPLEX1_49K"/>
    <property type="match status" value="1"/>
</dbReference>
<accession>A7NIV9</accession>
<proteinExistence type="inferred from homology"/>
<keyword id="KW-1003">Cell membrane</keyword>
<keyword id="KW-0472">Membrane</keyword>
<keyword id="KW-0520">NAD</keyword>
<keyword id="KW-0874">Quinone</keyword>
<keyword id="KW-1185">Reference proteome</keyword>
<keyword id="KW-1278">Translocase</keyword>
<keyword id="KW-0813">Transport</keyword>
<keyword id="KW-0830">Ubiquinone</keyword>
<evidence type="ECO:0000255" key="1">
    <source>
        <dbReference type="HAMAP-Rule" id="MF_01358"/>
    </source>
</evidence>